<protein>
    <recommendedName>
        <fullName evidence="1">Probable cell division protein WhiA</fullName>
    </recommendedName>
</protein>
<dbReference type="EMBL" id="CP001407">
    <property type="protein sequence ID" value="ACO26242.1"/>
    <property type="molecule type" value="Genomic_DNA"/>
</dbReference>
<dbReference type="RefSeq" id="WP_000006561.1">
    <property type="nucleotide sequence ID" value="NZ_CP009318.1"/>
</dbReference>
<dbReference type="SMR" id="C1EZD4"/>
<dbReference type="GeneID" id="75088327"/>
<dbReference type="KEGG" id="bcx:BCA_5281"/>
<dbReference type="PATRIC" id="fig|572264.18.peg.5204"/>
<dbReference type="Proteomes" id="UP000002210">
    <property type="component" value="Chromosome"/>
</dbReference>
<dbReference type="GO" id="GO:0003677">
    <property type="term" value="F:DNA binding"/>
    <property type="evidence" value="ECO:0007669"/>
    <property type="project" value="UniProtKB-UniRule"/>
</dbReference>
<dbReference type="GO" id="GO:0051301">
    <property type="term" value="P:cell division"/>
    <property type="evidence" value="ECO:0007669"/>
    <property type="project" value="UniProtKB-UniRule"/>
</dbReference>
<dbReference type="GO" id="GO:0043937">
    <property type="term" value="P:regulation of sporulation"/>
    <property type="evidence" value="ECO:0007669"/>
    <property type="project" value="InterPro"/>
</dbReference>
<dbReference type="FunFam" id="3.10.28.10:FF:000002">
    <property type="entry name" value="Probable cell division protein WhiA"/>
    <property type="match status" value="1"/>
</dbReference>
<dbReference type="Gene3D" id="3.10.28.10">
    <property type="entry name" value="Homing endonucleases"/>
    <property type="match status" value="1"/>
</dbReference>
<dbReference type="HAMAP" id="MF_01420">
    <property type="entry name" value="HTH_type_WhiA"/>
    <property type="match status" value="1"/>
</dbReference>
<dbReference type="InterPro" id="IPR027434">
    <property type="entry name" value="Homing_endonucl"/>
</dbReference>
<dbReference type="InterPro" id="IPR018478">
    <property type="entry name" value="Sporu_reg_WhiA_N_dom"/>
</dbReference>
<dbReference type="InterPro" id="IPR003802">
    <property type="entry name" value="Sporulation_regulator_WhiA"/>
</dbReference>
<dbReference type="InterPro" id="IPR023054">
    <property type="entry name" value="Sporulation_regulator_WhiA_C"/>
</dbReference>
<dbReference type="InterPro" id="IPR039518">
    <property type="entry name" value="WhiA_LAGLIDADG_dom"/>
</dbReference>
<dbReference type="NCBIfam" id="TIGR00647">
    <property type="entry name" value="DNA_bind_WhiA"/>
    <property type="match status" value="1"/>
</dbReference>
<dbReference type="PANTHER" id="PTHR37307">
    <property type="entry name" value="CELL DIVISION PROTEIN WHIA-RELATED"/>
    <property type="match status" value="1"/>
</dbReference>
<dbReference type="PANTHER" id="PTHR37307:SF1">
    <property type="entry name" value="CELL DIVISION PROTEIN WHIA-RELATED"/>
    <property type="match status" value="1"/>
</dbReference>
<dbReference type="Pfam" id="PF02650">
    <property type="entry name" value="HTH_WhiA"/>
    <property type="match status" value="1"/>
</dbReference>
<dbReference type="Pfam" id="PF14527">
    <property type="entry name" value="LAGLIDADG_WhiA"/>
    <property type="match status" value="1"/>
</dbReference>
<dbReference type="Pfam" id="PF10298">
    <property type="entry name" value="WhiA_N"/>
    <property type="match status" value="1"/>
</dbReference>
<dbReference type="SUPFAM" id="SSF55608">
    <property type="entry name" value="Homing endonucleases"/>
    <property type="match status" value="1"/>
</dbReference>
<proteinExistence type="inferred from homology"/>
<evidence type="ECO:0000255" key="1">
    <source>
        <dbReference type="HAMAP-Rule" id="MF_01420"/>
    </source>
</evidence>
<comment type="function">
    <text evidence="1">Involved in cell division and chromosome segregation.</text>
</comment>
<comment type="similarity">
    <text evidence="1">Belongs to the WhiA family.</text>
</comment>
<accession>C1EZD4</accession>
<organism>
    <name type="scientific">Bacillus cereus (strain 03BB102)</name>
    <dbReference type="NCBI Taxonomy" id="572264"/>
    <lineage>
        <taxon>Bacteria</taxon>
        <taxon>Bacillati</taxon>
        <taxon>Bacillota</taxon>
        <taxon>Bacilli</taxon>
        <taxon>Bacillales</taxon>
        <taxon>Bacillaceae</taxon>
        <taxon>Bacillus</taxon>
        <taxon>Bacillus cereus group</taxon>
    </lineage>
</organism>
<sequence length="316" mass="36366">MSFASETKKELTNLEMKECCEKAELSALLRMNGSLSFSNRRLSIDIQTENAAIARRIYTLLKKGYDVTVELLVRKKMRLKKNNVYIVRLVEKSREILADLHIVRDDFSFIRNISQELIEKKCCKRSYLRGAFLAGGSVNNPETSSYHLEIFSLYKEHNDAICELMNGFDLNSKTLERRKGYITYLKEAEKITEFLNIIGAHNALLRFEDIRIVRDMRNSVNRLVNCETANLNKTIGAALRQIENIRYIDETVGLDILPDKLREIAQLRRDYQDVTLKELGEMVSGGKISKSGINHRLRKIDDIAEKLRAGETVAKK</sequence>
<name>WHIA_BACC3</name>
<keyword id="KW-0131">Cell cycle</keyword>
<keyword id="KW-0132">Cell division</keyword>
<keyword id="KW-0238">DNA-binding</keyword>
<feature type="chain" id="PRO_1000184853" description="Probable cell division protein WhiA">
    <location>
        <begin position="1"/>
        <end position="316"/>
    </location>
</feature>
<feature type="DNA-binding region" description="H-T-H motif" evidence="1">
    <location>
        <begin position="275"/>
        <end position="309"/>
    </location>
</feature>
<gene>
    <name evidence="1" type="primary">whiA</name>
    <name type="ordered locus">BCA_5281</name>
</gene>
<reference key="1">
    <citation type="submission" date="2009-02" db="EMBL/GenBank/DDBJ databases">
        <title>Genome sequence of Bacillus cereus 03BB102.</title>
        <authorList>
            <person name="Dodson R.J."/>
            <person name="Jackson P."/>
            <person name="Munk A.C."/>
            <person name="Brettin T."/>
            <person name="Bruce D."/>
            <person name="Detter C."/>
            <person name="Tapia R."/>
            <person name="Han C."/>
            <person name="Sutton G."/>
            <person name="Sims D."/>
        </authorList>
    </citation>
    <scope>NUCLEOTIDE SEQUENCE [LARGE SCALE GENOMIC DNA]</scope>
    <source>
        <strain>03BB102</strain>
    </source>
</reference>